<evidence type="ECO:0000255" key="1">
    <source>
        <dbReference type="HAMAP-Rule" id="MF_00294"/>
    </source>
</evidence>
<evidence type="ECO:0000305" key="2"/>
<name>RL331_GEOSE</name>
<feature type="chain" id="PRO_0000170137" description="Large ribosomal subunit protein bL33A">
    <location>
        <begin position="1"/>
        <end position="49"/>
    </location>
</feature>
<sequence>MRVNITLACTECGERNYITSKNKRNNPERLELKKYCPRDRKVTLHRETK</sequence>
<comment type="similarity">
    <text evidence="2">Belongs to the bacterial ribosomal protein bL33 family.</text>
</comment>
<keyword id="KW-0903">Direct protein sequencing</keyword>
<keyword id="KW-0687">Ribonucleoprotein</keyword>
<keyword id="KW-0689">Ribosomal protein</keyword>
<protein>
    <recommendedName>
        <fullName evidence="1">Large ribosomal subunit protein bL33A</fullName>
    </recommendedName>
    <alternativeName>
        <fullName>50S ribosomal protein L33 1</fullName>
    </alternativeName>
</protein>
<gene>
    <name type="primary">rpmGA</name>
    <name type="synonym">rpmG</name>
    <name type="synonym">rpmG1</name>
</gene>
<dbReference type="PIR" id="B48396">
    <property type="entry name" value="B48396"/>
</dbReference>
<dbReference type="RefSeq" id="WP_011231931.1">
    <property type="nucleotide sequence ID" value="NZ_RCTK01000020.1"/>
</dbReference>
<dbReference type="SMR" id="P23375"/>
<dbReference type="GeneID" id="89611349"/>
<dbReference type="OrthoDB" id="197660at2"/>
<dbReference type="GO" id="GO:0005737">
    <property type="term" value="C:cytoplasm"/>
    <property type="evidence" value="ECO:0007669"/>
    <property type="project" value="UniProtKB-ARBA"/>
</dbReference>
<dbReference type="GO" id="GO:1990904">
    <property type="term" value="C:ribonucleoprotein complex"/>
    <property type="evidence" value="ECO:0007669"/>
    <property type="project" value="UniProtKB-KW"/>
</dbReference>
<dbReference type="GO" id="GO:0005840">
    <property type="term" value="C:ribosome"/>
    <property type="evidence" value="ECO:0007669"/>
    <property type="project" value="UniProtKB-KW"/>
</dbReference>
<dbReference type="GO" id="GO:0003735">
    <property type="term" value="F:structural constituent of ribosome"/>
    <property type="evidence" value="ECO:0007669"/>
    <property type="project" value="InterPro"/>
</dbReference>
<dbReference type="GO" id="GO:0006412">
    <property type="term" value="P:translation"/>
    <property type="evidence" value="ECO:0007669"/>
    <property type="project" value="UniProtKB-UniRule"/>
</dbReference>
<dbReference type="Gene3D" id="2.20.28.120">
    <property type="entry name" value="Ribosomal protein L33"/>
    <property type="match status" value="1"/>
</dbReference>
<dbReference type="HAMAP" id="MF_00294">
    <property type="entry name" value="Ribosomal_bL33"/>
    <property type="match status" value="1"/>
</dbReference>
<dbReference type="InterPro" id="IPR001705">
    <property type="entry name" value="Ribosomal_bL33"/>
</dbReference>
<dbReference type="InterPro" id="IPR018264">
    <property type="entry name" value="Ribosomal_bL33_CS"/>
</dbReference>
<dbReference type="InterPro" id="IPR038584">
    <property type="entry name" value="Ribosomal_bL33_sf"/>
</dbReference>
<dbReference type="InterPro" id="IPR011332">
    <property type="entry name" value="Ribosomal_zn-bd"/>
</dbReference>
<dbReference type="NCBIfam" id="NF001764">
    <property type="entry name" value="PRK00504.1"/>
    <property type="match status" value="1"/>
</dbReference>
<dbReference type="NCBIfam" id="NF001860">
    <property type="entry name" value="PRK00595.1"/>
    <property type="match status" value="1"/>
</dbReference>
<dbReference type="NCBIfam" id="TIGR01023">
    <property type="entry name" value="rpmG_bact"/>
    <property type="match status" value="1"/>
</dbReference>
<dbReference type="PANTHER" id="PTHR43168">
    <property type="entry name" value="50S RIBOSOMAL PROTEIN L33, CHLOROPLASTIC"/>
    <property type="match status" value="1"/>
</dbReference>
<dbReference type="PANTHER" id="PTHR43168:SF2">
    <property type="entry name" value="LARGE RIBOSOMAL SUBUNIT PROTEIN BL33C"/>
    <property type="match status" value="1"/>
</dbReference>
<dbReference type="Pfam" id="PF00471">
    <property type="entry name" value="Ribosomal_L33"/>
    <property type="match status" value="1"/>
</dbReference>
<dbReference type="SUPFAM" id="SSF57829">
    <property type="entry name" value="Zn-binding ribosomal proteins"/>
    <property type="match status" value="1"/>
</dbReference>
<dbReference type="PROSITE" id="PS00582">
    <property type="entry name" value="RIBOSOMAL_L33"/>
    <property type="match status" value="1"/>
</dbReference>
<organism>
    <name type="scientific">Geobacillus stearothermophilus</name>
    <name type="common">Bacillus stearothermophilus</name>
    <dbReference type="NCBI Taxonomy" id="1422"/>
    <lineage>
        <taxon>Bacteria</taxon>
        <taxon>Bacillati</taxon>
        <taxon>Bacillota</taxon>
        <taxon>Bacilli</taxon>
        <taxon>Bacillales</taxon>
        <taxon>Anoxybacillaceae</taxon>
        <taxon>Geobacillus</taxon>
    </lineage>
</organism>
<reference key="1">
    <citation type="journal article" date="1991" name="Biochimie">
        <title>Characterization and primary structure of proteins L28, L33 and L34 from Bacillus stearothermophilus ribosomes.</title>
        <authorList>
            <person name="Kruft V."/>
            <person name="Kapp U."/>
            <person name="Wittmann-Liebold B."/>
        </authorList>
    </citation>
    <scope>PROTEIN SEQUENCE</scope>
</reference>
<accession>P23375</accession>
<proteinExistence type="evidence at protein level"/>